<gene>
    <name evidence="1" type="primary">trmD</name>
    <name type="ordered locus">GM21_3490</name>
</gene>
<sequence length="249" mass="27499">MKFDILTLFPAMFEGPLTESILKRASEKGLIEVALHNIRDWAFDKHATADDAPYGGGAGMVMKVEPIAGAIEAVKAKRPNSKVVLTTPCGRPFNHQVAEELSREEGVVIICGRYEGVDERVRTLCVDDEISLGDFVLTGGEIAAMVIVDAVSRLVPGVLGSDESAQYDSFADGLLEYPQYTRPPEFRGEKVPDILLSGNHAEIAKWRRKEQMKRTLASRPELLDGIEWSKADKKLFAEVEKADQEKVAR</sequence>
<comment type="function">
    <text evidence="1">Specifically methylates guanosine-37 in various tRNAs.</text>
</comment>
<comment type="catalytic activity">
    <reaction evidence="1">
        <text>guanosine(37) in tRNA + S-adenosyl-L-methionine = N(1)-methylguanosine(37) in tRNA + S-adenosyl-L-homocysteine + H(+)</text>
        <dbReference type="Rhea" id="RHEA:36899"/>
        <dbReference type="Rhea" id="RHEA-COMP:10145"/>
        <dbReference type="Rhea" id="RHEA-COMP:10147"/>
        <dbReference type="ChEBI" id="CHEBI:15378"/>
        <dbReference type="ChEBI" id="CHEBI:57856"/>
        <dbReference type="ChEBI" id="CHEBI:59789"/>
        <dbReference type="ChEBI" id="CHEBI:73542"/>
        <dbReference type="ChEBI" id="CHEBI:74269"/>
        <dbReference type="EC" id="2.1.1.228"/>
    </reaction>
</comment>
<comment type="subunit">
    <text evidence="1">Homodimer.</text>
</comment>
<comment type="subcellular location">
    <subcellularLocation>
        <location evidence="1">Cytoplasm</location>
    </subcellularLocation>
</comment>
<comment type="similarity">
    <text evidence="1">Belongs to the RNA methyltransferase TrmD family.</text>
</comment>
<feature type="chain" id="PRO_1000212227" description="tRNA (guanine-N(1)-)-methyltransferase">
    <location>
        <begin position="1"/>
        <end position="249"/>
    </location>
</feature>
<feature type="binding site" evidence="1">
    <location>
        <position position="112"/>
    </location>
    <ligand>
        <name>S-adenosyl-L-methionine</name>
        <dbReference type="ChEBI" id="CHEBI:59789"/>
    </ligand>
</feature>
<feature type="binding site" evidence="1">
    <location>
        <begin position="132"/>
        <end position="137"/>
    </location>
    <ligand>
        <name>S-adenosyl-L-methionine</name>
        <dbReference type="ChEBI" id="CHEBI:59789"/>
    </ligand>
</feature>
<dbReference type="EC" id="2.1.1.228" evidence="1"/>
<dbReference type="EMBL" id="CP001661">
    <property type="protein sequence ID" value="ACT19512.1"/>
    <property type="molecule type" value="Genomic_DNA"/>
</dbReference>
<dbReference type="SMR" id="C6E5I8"/>
<dbReference type="STRING" id="443144.GM21_3490"/>
<dbReference type="KEGG" id="gem:GM21_3490"/>
<dbReference type="eggNOG" id="COG0336">
    <property type="taxonomic scope" value="Bacteria"/>
</dbReference>
<dbReference type="HOGENOM" id="CLU_047363_0_1_7"/>
<dbReference type="OrthoDB" id="9807416at2"/>
<dbReference type="GO" id="GO:0005829">
    <property type="term" value="C:cytosol"/>
    <property type="evidence" value="ECO:0007669"/>
    <property type="project" value="TreeGrafter"/>
</dbReference>
<dbReference type="GO" id="GO:0052906">
    <property type="term" value="F:tRNA (guanine(37)-N1)-methyltransferase activity"/>
    <property type="evidence" value="ECO:0007669"/>
    <property type="project" value="UniProtKB-UniRule"/>
</dbReference>
<dbReference type="GO" id="GO:0002939">
    <property type="term" value="P:tRNA N1-guanine methylation"/>
    <property type="evidence" value="ECO:0007669"/>
    <property type="project" value="TreeGrafter"/>
</dbReference>
<dbReference type="CDD" id="cd18080">
    <property type="entry name" value="TrmD-like"/>
    <property type="match status" value="1"/>
</dbReference>
<dbReference type="FunFam" id="1.10.1270.20:FF:000001">
    <property type="entry name" value="tRNA (guanine-N(1)-)-methyltransferase"/>
    <property type="match status" value="1"/>
</dbReference>
<dbReference type="FunFam" id="3.40.1280.10:FF:000001">
    <property type="entry name" value="tRNA (guanine-N(1)-)-methyltransferase"/>
    <property type="match status" value="1"/>
</dbReference>
<dbReference type="Gene3D" id="3.40.1280.10">
    <property type="match status" value="1"/>
</dbReference>
<dbReference type="Gene3D" id="1.10.1270.20">
    <property type="entry name" value="tRNA(m1g37)methyltransferase, domain 2"/>
    <property type="match status" value="1"/>
</dbReference>
<dbReference type="HAMAP" id="MF_00605">
    <property type="entry name" value="TrmD"/>
    <property type="match status" value="1"/>
</dbReference>
<dbReference type="InterPro" id="IPR029028">
    <property type="entry name" value="Alpha/beta_knot_MTases"/>
</dbReference>
<dbReference type="InterPro" id="IPR023148">
    <property type="entry name" value="tRNA_m1G_MeTrfase_C_sf"/>
</dbReference>
<dbReference type="InterPro" id="IPR002649">
    <property type="entry name" value="tRNA_m1G_MeTrfase_TrmD"/>
</dbReference>
<dbReference type="InterPro" id="IPR029026">
    <property type="entry name" value="tRNA_m1G_MTases_N"/>
</dbReference>
<dbReference type="InterPro" id="IPR016009">
    <property type="entry name" value="tRNA_MeTrfase_TRMD/TRM10"/>
</dbReference>
<dbReference type="NCBIfam" id="NF000648">
    <property type="entry name" value="PRK00026.1"/>
    <property type="match status" value="1"/>
</dbReference>
<dbReference type="NCBIfam" id="TIGR00088">
    <property type="entry name" value="trmD"/>
    <property type="match status" value="1"/>
</dbReference>
<dbReference type="PANTHER" id="PTHR46417">
    <property type="entry name" value="TRNA (GUANINE-N(1)-)-METHYLTRANSFERASE"/>
    <property type="match status" value="1"/>
</dbReference>
<dbReference type="PANTHER" id="PTHR46417:SF1">
    <property type="entry name" value="TRNA (GUANINE-N(1)-)-METHYLTRANSFERASE"/>
    <property type="match status" value="1"/>
</dbReference>
<dbReference type="Pfam" id="PF01746">
    <property type="entry name" value="tRNA_m1G_MT"/>
    <property type="match status" value="1"/>
</dbReference>
<dbReference type="PIRSF" id="PIRSF000386">
    <property type="entry name" value="tRNA_mtase"/>
    <property type="match status" value="1"/>
</dbReference>
<dbReference type="SUPFAM" id="SSF75217">
    <property type="entry name" value="alpha/beta knot"/>
    <property type="match status" value="1"/>
</dbReference>
<reference key="1">
    <citation type="submission" date="2009-07" db="EMBL/GenBank/DDBJ databases">
        <title>Complete sequence of Geobacter sp. M21.</title>
        <authorList>
            <consortium name="US DOE Joint Genome Institute"/>
            <person name="Lucas S."/>
            <person name="Copeland A."/>
            <person name="Lapidus A."/>
            <person name="Glavina del Rio T."/>
            <person name="Dalin E."/>
            <person name="Tice H."/>
            <person name="Bruce D."/>
            <person name="Goodwin L."/>
            <person name="Pitluck S."/>
            <person name="Saunders E."/>
            <person name="Brettin T."/>
            <person name="Detter J.C."/>
            <person name="Han C."/>
            <person name="Larimer F."/>
            <person name="Land M."/>
            <person name="Hauser L."/>
            <person name="Kyrpides N."/>
            <person name="Ovchinnikova G."/>
            <person name="Lovley D."/>
        </authorList>
    </citation>
    <scope>NUCLEOTIDE SEQUENCE [LARGE SCALE GENOMIC DNA]</scope>
    <source>
        <strain>M21</strain>
    </source>
</reference>
<evidence type="ECO:0000255" key="1">
    <source>
        <dbReference type="HAMAP-Rule" id="MF_00605"/>
    </source>
</evidence>
<organism>
    <name type="scientific">Geobacter sp. (strain M21)</name>
    <dbReference type="NCBI Taxonomy" id="443144"/>
    <lineage>
        <taxon>Bacteria</taxon>
        <taxon>Pseudomonadati</taxon>
        <taxon>Thermodesulfobacteriota</taxon>
        <taxon>Desulfuromonadia</taxon>
        <taxon>Geobacterales</taxon>
        <taxon>Geobacteraceae</taxon>
        <taxon>Geobacter</taxon>
    </lineage>
</organism>
<proteinExistence type="inferred from homology"/>
<accession>C6E5I8</accession>
<protein>
    <recommendedName>
        <fullName evidence="1">tRNA (guanine-N(1)-)-methyltransferase</fullName>
        <ecNumber evidence="1">2.1.1.228</ecNumber>
    </recommendedName>
    <alternativeName>
        <fullName evidence="1">M1G-methyltransferase</fullName>
    </alternativeName>
    <alternativeName>
        <fullName evidence="1">tRNA [GM37] methyltransferase</fullName>
    </alternativeName>
</protein>
<name>TRMD_GEOSM</name>
<keyword id="KW-0963">Cytoplasm</keyword>
<keyword id="KW-0489">Methyltransferase</keyword>
<keyword id="KW-0949">S-adenosyl-L-methionine</keyword>
<keyword id="KW-0808">Transferase</keyword>
<keyword id="KW-0819">tRNA processing</keyword>